<name>RS13_SODGM</name>
<sequence length="118" mass="13290">MARIAGINIPDHKHTVIALTSIYGIGKTRSQHICAATGIAEHVKISELSEEQIDTLREAVTKFVVEGDLRREVTLSIKRLMDLGTYRGLRHRRGLPVRGQRTKTNARTRKGPRKPIKK</sequence>
<dbReference type="EMBL" id="AP008232">
    <property type="protein sequence ID" value="BAE75531.1"/>
    <property type="molecule type" value="Genomic_DNA"/>
</dbReference>
<dbReference type="RefSeq" id="WP_011412067.1">
    <property type="nucleotide sequence ID" value="NC_007712.1"/>
</dbReference>
<dbReference type="SMR" id="Q2NQP4"/>
<dbReference type="STRING" id="343509.SG2256"/>
<dbReference type="KEGG" id="sgl:SG2256"/>
<dbReference type="eggNOG" id="COG0099">
    <property type="taxonomic scope" value="Bacteria"/>
</dbReference>
<dbReference type="HOGENOM" id="CLU_103849_1_2_6"/>
<dbReference type="OrthoDB" id="9803610at2"/>
<dbReference type="BioCyc" id="SGLO343509:SGP1_RS20735-MONOMER"/>
<dbReference type="Proteomes" id="UP000001932">
    <property type="component" value="Chromosome"/>
</dbReference>
<dbReference type="GO" id="GO:0005829">
    <property type="term" value="C:cytosol"/>
    <property type="evidence" value="ECO:0007669"/>
    <property type="project" value="TreeGrafter"/>
</dbReference>
<dbReference type="GO" id="GO:0015935">
    <property type="term" value="C:small ribosomal subunit"/>
    <property type="evidence" value="ECO:0007669"/>
    <property type="project" value="TreeGrafter"/>
</dbReference>
<dbReference type="GO" id="GO:0019843">
    <property type="term" value="F:rRNA binding"/>
    <property type="evidence" value="ECO:0007669"/>
    <property type="project" value="UniProtKB-UniRule"/>
</dbReference>
<dbReference type="GO" id="GO:0003735">
    <property type="term" value="F:structural constituent of ribosome"/>
    <property type="evidence" value="ECO:0007669"/>
    <property type="project" value="InterPro"/>
</dbReference>
<dbReference type="GO" id="GO:0000049">
    <property type="term" value="F:tRNA binding"/>
    <property type="evidence" value="ECO:0007669"/>
    <property type="project" value="UniProtKB-UniRule"/>
</dbReference>
<dbReference type="GO" id="GO:0006412">
    <property type="term" value="P:translation"/>
    <property type="evidence" value="ECO:0007669"/>
    <property type="project" value="UniProtKB-UniRule"/>
</dbReference>
<dbReference type="FunFam" id="1.10.8.50:FF:000001">
    <property type="entry name" value="30S ribosomal protein S13"/>
    <property type="match status" value="1"/>
</dbReference>
<dbReference type="FunFam" id="4.10.910.10:FF:000001">
    <property type="entry name" value="30S ribosomal protein S13"/>
    <property type="match status" value="1"/>
</dbReference>
<dbReference type="Gene3D" id="1.10.8.50">
    <property type="match status" value="1"/>
</dbReference>
<dbReference type="Gene3D" id="4.10.910.10">
    <property type="entry name" value="30s ribosomal protein s13, domain 2"/>
    <property type="match status" value="1"/>
</dbReference>
<dbReference type="HAMAP" id="MF_01315">
    <property type="entry name" value="Ribosomal_uS13"/>
    <property type="match status" value="1"/>
</dbReference>
<dbReference type="InterPro" id="IPR027437">
    <property type="entry name" value="Rbsml_uS13_C"/>
</dbReference>
<dbReference type="InterPro" id="IPR001892">
    <property type="entry name" value="Ribosomal_uS13"/>
</dbReference>
<dbReference type="InterPro" id="IPR010979">
    <property type="entry name" value="Ribosomal_uS13-like_H2TH"/>
</dbReference>
<dbReference type="InterPro" id="IPR019980">
    <property type="entry name" value="Ribosomal_uS13_bac-type"/>
</dbReference>
<dbReference type="InterPro" id="IPR018269">
    <property type="entry name" value="Ribosomal_uS13_CS"/>
</dbReference>
<dbReference type="NCBIfam" id="TIGR03631">
    <property type="entry name" value="uS13_bact"/>
    <property type="match status" value="1"/>
</dbReference>
<dbReference type="PANTHER" id="PTHR10871">
    <property type="entry name" value="30S RIBOSOMAL PROTEIN S13/40S RIBOSOMAL PROTEIN S18"/>
    <property type="match status" value="1"/>
</dbReference>
<dbReference type="PANTHER" id="PTHR10871:SF1">
    <property type="entry name" value="SMALL RIBOSOMAL SUBUNIT PROTEIN US13M"/>
    <property type="match status" value="1"/>
</dbReference>
<dbReference type="Pfam" id="PF00416">
    <property type="entry name" value="Ribosomal_S13"/>
    <property type="match status" value="1"/>
</dbReference>
<dbReference type="PIRSF" id="PIRSF002134">
    <property type="entry name" value="Ribosomal_S13"/>
    <property type="match status" value="1"/>
</dbReference>
<dbReference type="SUPFAM" id="SSF46946">
    <property type="entry name" value="S13-like H2TH domain"/>
    <property type="match status" value="1"/>
</dbReference>
<dbReference type="PROSITE" id="PS00646">
    <property type="entry name" value="RIBOSOMAL_S13_1"/>
    <property type="match status" value="1"/>
</dbReference>
<dbReference type="PROSITE" id="PS50159">
    <property type="entry name" value="RIBOSOMAL_S13_2"/>
    <property type="match status" value="1"/>
</dbReference>
<feature type="chain" id="PRO_0000306712" description="Small ribosomal subunit protein uS13">
    <location>
        <begin position="1"/>
        <end position="118"/>
    </location>
</feature>
<feature type="region of interest" description="Disordered" evidence="2">
    <location>
        <begin position="91"/>
        <end position="118"/>
    </location>
</feature>
<proteinExistence type="inferred from homology"/>
<reference key="1">
    <citation type="journal article" date="2006" name="Genome Res.">
        <title>Massive genome erosion and functional adaptations provide insights into the symbiotic lifestyle of Sodalis glossinidius in the tsetse host.</title>
        <authorList>
            <person name="Toh H."/>
            <person name="Weiss B.L."/>
            <person name="Perkin S.A.H."/>
            <person name="Yamashita A."/>
            <person name="Oshima K."/>
            <person name="Hattori M."/>
            <person name="Aksoy S."/>
        </authorList>
    </citation>
    <scope>NUCLEOTIDE SEQUENCE [LARGE SCALE GENOMIC DNA]</scope>
    <source>
        <strain>morsitans</strain>
    </source>
</reference>
<gene>
    <name evidence="1" type="primary">rpsM</name>
    <name type="ordered locus">SG2256</name>
</gene>
<evidence type="ECO:0000255" key="1">
    <source>
        <dbReference type="HAMAP-Rule" id="MF_01315"/>
    </source>
</evidence>
<evidence type="ECO:0000256" key="2">
    <source>
        <dbReference type="SAM" id="MobiDB-lite"/>
    </source>
</evidence>
<evidence type="ECO:0000305" key="3"/>
<accession>Q2NQP4</accession>
<protein>
    <recommendedName>
        <fullName evidence="1">Small ribosomal subunit protein uS13</fullName>
    </recommendedName>
    <alternativeName>
        <fullName evidence="3">30S ribosomal protein S13</fullName>
    </alternativeName>
</protein>
<comment type="function">
    <text evidence="1">Located at the top of the head of the 30S subunit, it contacts several helices of the 16S rRNA. In the 70S ribosome it contacts the 23S rRNA (bridge B1a) and protein L5 of the 50S subunit (bridge B1b), connecting the 2 subunits; these bridges are implicated in subunit movement. Contacts the tRNAs in the A and P-sites.</text>
</comment>
<comment type="subunit">
    <text evidence="1">Part of the 30S ribosomal subunit. Forms a loose heterodimer with protein S19. Forms two bridges to the 50S subunit in the 70S ribosome.</text>
</comment>
<comment type="similarity">
    <text evidence="1">Belongs to the universal ribosomal protein uS13 family.</text>
</comment>
<organism>
    <name type="scientific">Sodalis glossinidius (strain morsitans)</name>
    <dbReference type="NCBI Taxonomy" id="343509"/>
    <lineage>
        <taxon>Bacteria</taxon>
        <taxon>Pseudomonadati</taxon>
        <taxon>Pseudomonadota</taxon>
        <taxon>Gammaproteobacteria</taxon>
        <taxon>Enterobacterales</taxon>
        <taxon>Bruguierivoracaceae</taxon>
        <taxon>Sodalis</taxon>
    </lineage>
</organism>
<keyword id="KW-0687">Ribonucleoprotein</keyword>
<keyword id="KW-0689">Ribosomal protein</keyword>
<keyword id="KW-0694">RNA-binding</keyword>
<keyword id="KW-0699">rRNA-binding</keyword>
<keyword id="KW-0820">tRNA-binding</keyword>